<name>RL30_SYNAS</name>
<proteinExistence type="inferred from homology"/>
<gene>
    <name evidence="1" type="primary">rpmD</name>
    <name type="ordered locus">SYNAS_03200</name>
    <name type="ORF">SYN_01593</name>
</gene>
<protein>
    <recommendedName>
        <fullName evidence="1">Large ribosomal subunit protein uL30</fullName>
    </recommendedName>
    <alternativeName>
        <fullName evidence="2">50S ribosomal protein L30</fullName>
    </alternativeName>
</protein>
<comment type="subunit">
    <text evidence="1">Part of the 50S ribosomal subunit.</text>
</comment>
<comment type="similarity">
    <text evidence="1">Belongs to the universal ribosomal protein uL30 family.</text>
</comment>
<keyword id="KW-1185">Reference proteome</keyword>
<keyword id="KW-0687">Ribonucleoprotein</keyword>
<keyword id="KW-0689">Ribosomal protein</keyword>
<organism>
    <name type="scientific">Syntrophus aciditrophicus (strain SB)</name>
    <dbReference type="NCBI Taxonomy" id="56780"/>
    <lineage>
        <taxon>Bacteria</taxon>
        <taxon>Pseudomonadati</taxon>
        <taxon>Thermodesulfobacteriota</taxon>
        <taxon>Syntrophia</taxon>
        <taxon>Syntrophales</taxon>
        <taxon>Syntrophaceae</taxon>
        <taxon>Syntrophus</taxon>
    </lineage>
</organism>
<dbReference type="EMBL" id="CP000252">
    <property type="protein sequence ID" value="ABC76199.1"/>
    <property type="molecule type" value="Genomic_DNA"/>
</dbReference>
<dbReference type="RefSeq" id="WP_011416233.1">
    <property type="nucleotide sequence ID" value="NC_007759.1"/>
</dbReference>
<dbReference type="SMR" id="Q2LQB9"/>
<dbReference type="FunCoup" id="Q2LQB9">
    <property type="interactions" value="384"/>
</dbReference>
<dbReference type="STRING" id="56780.SYN_01593"/>
<dbReference type="KEGG" id="sat:SYN_01593"/>
<dbReference type="eggNOG" id="COG1841">
    <property type="taxonomic scope" value="Bacteria"/>
</dbReference>
<dbReference type="HOGENOM" id="CLU_131047_2_1_7"/>
<dbReference type="InParanoid" id="Q2LQB9"/>
<dbReference type="OrthoDB" id="9812790at2"/>
<dbReference type="Proteomes" id="UP000001933">
    <property type="component" value="Chromosome"/>
</dbReference>
<dbReference type="GO" id="GO:0022625">
    <property type="term" value="C:cytosolic large ribosomal subunit"/>
    <property type="evidence" value="ECO:0007669"/>
    <property type="project" value="TreeGrafter"/>
</dbReference>
<dbReference type="GO" id="GO:0003735">
    <property type="term" value="F:structural constituent of ribosome"/>
    <property type="evidence" value="ECO:0007669"/>
    <property type="project" value="InterPro"/>
</dbReference>
<dbReference type="GO" id="GO:0006412">
    <property type="term" value="P:translation"/>
    <property type="evidence" value="ECO:0007669"/>
    <property type="project" value="InterPro"/>
</dbReference>
<dbReference type="CDD" id="cd01658">
    <property type="entry name" value="Ribosomal_L30"/>
    <property type="match status" value="1"/>
</dbReference>
<dbReference type="FunFam" id="3.30.1390.20:FF:000001">
    <property type="entry name" value="50S ribosomal protein L30"/>
    <property type="match status" value="1"/>
</dbReference>
<dbReference type="Gene3D" id="3.30.1390.20">
    <property type="entry name" value="Ribosomal protein L30, ferredoxin-like fold domain"/>
    <property type="match status" value="1"/>
</dbReference>
<dbReference type="HAMAP" id="MF_01371_B">
    <property type="entry name" value="Ribosomal_uL30_B"/>
    <property type="match status" value="1"/>
</dbReference>
<dbReference type="InterPro" id="IPR036919">
    <property type="entry name" value="Ribo_uL30_ferredoxin-like_sf"/>
</dbReference>
<dbReference type="InterPro" id="IPR005996">
    <property type="entry name" value="Ribosomal_uL30_bac-type"/>
</dbReference>
<dbReference type="InterPro" id="IPR016082">
    <property type="entry name" value="Ribosomal_uL30_ferredoxin-like"/>
</dbReference>
<dbReference type="NCBIfam" id="TIGR01308">
    <property type="entry name" value="rpmD_bact"/>
    <property type="match status" value="1"/>
</dbReference>
<dbReference type="PANTHER" id="PTHR15892:SF2">
    <property type="entry name" value="LARGE RIBOSOMAL SUBUNIT PROTEIN UL30M"/>
    <property type="match status" value="1"/>
</dbReference>
<dbReference type="PANTHER" id="PTHR15892">
    <property type="entry name" value="MITOCHONDRIAL RIBOSOMAL PROTEIN L30"/>
    <property type="match status" value="1"/>
</dbReference>
<dbReference type="Pfam" id="PF00327">
    <property type="entry name" value="Ribosomal_L30"/>
    <property type="match status" value="1"/>
</dbReference>
<dbReference type="PIRSF" id="PIRSF002211">
    <property type="entry name" value="Ribosomal_L30_bac-type"/>
    <property type="match status" value="1"/>
</dbReference>
<dbReference type="SUPFAM" id="SSF55129">
    <property type="entry name" value="Ribosomal protein L30p/L7e"/>
    <property type="match status" value="1"/>
</dbReference>
<sequence>MSKQLKITLKKSAIGRPSKQRDTLRGMGLSKINKAVVLKDCTEIRGMINKVSHLVSCEEVEGVE</sequence>
<feature type="chain" id="PRO_0000273880" description="Large ribosomal subunit protein uL30">
    <location>
        <begin position="1"/>
        <end position="64"/>
    </location>
</feature>
<evidence type="ECO:0000255" key="1">
    <source>
        <dbReference type="HAMAP-Rule" id="MF_01371"/>
    </source>
</evidence>
<evidence type="ECO:0000305" key="2"/>
<accession>Q2LQB9</accession>
<reference key="1">
    <citation type="journal article" date="2007" name="Proc. Natl. Acad. Sci. U.S.A.">
        <title>The genome of Syntrophus aciditrophicus: life at the thermodynamic limit of microbial growth.</title>
        <authorList>
            <person name="McInerney M.J."/>
            <person name="Rohlin L."/>
            <person name="Mouttaki H."/>
            <person name="Kim U."/>
            <person name="Krupp R.S."/>
            <person name="Rios-Hernandez L."/>
            <person name="Sieber J."/>
            <person name="Struchtemeyer C.G."/>
            <person name="Bhattacharyya A."/>
            <person name="Campbell J.W."/>
            <person name="Gunsalus R.P."/>
        </authorList>
    </citation>
    <scope>NUCLEOTIDE SEQUENCE [LARGE SCALE GENOMIC DNA]</scope>
    <source>
        <strain>SB</strain>
    </source>
</reference>